<accession>P72151</accession>
<proteinExistence type="evidence at protein level"/>
<reference key="1">
    <citation type="submission" date="1996-04" db="EMBL/GenBank/DDBJ databases">
        <title>Analysis of the type b flagellin gene of Pseudomonas aeruginosa PAO1.</title>
        <authorList>
            <person name="Wahl S.A."/>
            <person name="Baker N.R."/>
        </authorList>
    </citation>
    <scope>NUCLEOTIDE SEQUENCE [GENOMIC DNA]</scope>
    <source>
        <strain>ATCC 15692 / DSM 22644 / CIP 104116 / JCM 14847 / LMG 12228 / 1C / PRS 101 / PAO1</strain>
    </source>
</reference>
<reference key="2">
    <citation type="journal article" date="2000" name="Nature">
        <title>Complete genome sequence of Pseudomonas aeruginosa PAO1, an opportunistic pathogen.</title>
        <authorList>
            <person name="Stover C.K."/>
            <person name="Pham X.-Q.T."/>
            <person name="Erwin A.L."/>
            <person name="Mizoguchi S.D."/>
            <person name="Warrener P."/>
            <person name="Hickey M.J."/>
            <person name="Brinkman F.S.L."/>
            <person name="Hufnagle W.O."/>
            <person name="Kowalik D.J."/>
            <person name="Lagrou M."/>
            <person name="Garber R.L."/>
            <person name="Goltry L."/>
            <person name="Tolentino E."/>
            <person name="Westbrock-Wadman S."/>
            <person name="Yuan Y."/>
            <person name="Brody L.L."/>
            <person name="Coulter S.N."/>
            <person name="Folger K.R."/>
            <person name="Kas A."/>
            <person name="Larbig K."/>
            <person name="Lim R.M."/>
            <person name="Smith K.A."/>
            <person name="Spencer D.H."/>
            <person name="Wong G.K.-S."/>
            <person name="Wu Z."/>
            <person name="Paulsen I.T."/>
            <person name="Reizer J."/>
            <person name="Saier M.H. Jr."/>
            <person name="Hancock R.E.W."/>
            <person name="Lory S."/>
            <person name="Olson M.V."/>
        </authorList>
    </citation>
    <scope>NUCLEOTIDE SEQUENCE [LARGE SCALE GENOMIC DNA]</scope>
    <source>
        <strain>ATCC 15692 / DSM 22644 / CIP 104116 / JCM 14847 / LMG 12228 / 1C / PRS 101 / PAO1</strain>
    </source>
</reference>
<reference key="3">
    <citation type="journal article" date="1990" name="J. Bacteriol.">
        <title>Phosphorylated tyrosine in the flagellum filament protein of Pseudomonas aeruginosa.</title>
        <authorList>
            <person name="Kelly-Wintenberg K."/>
            <person name="Anderson T."/>
            <person name="Montie T.C."/>
        </authorList>
    </citation>
    <scope>PHOSPHORYLATION</scope>
    <source>
        <strain>ATCC 15692 / DSM 22644 / CIP 104116 / JCM 14847 / LMG 12228 / 1C / PRS 101 / PAO1</strain>
        <strain>M-2</strain>
    </source>
</reference>
<gene>
    <name type="primary">fliC</name>
    <name type="ordered locus">PA1092</name>
</gene>
<name>FLICB_PSEAE</name>
<comment type="function">
    <text>Flagellin is the subunit protein which polymerizes to form the filaments of bacterial flagella.</text>
</comment>
<comment type="subcellular location">
    <subcellularLocation>
        <location>Secreted</location>
    </subcellularLocation>
    <subcellularLocation>
        <location>Bacterial flagellum</location>
    </subcellularLocation>
</comment>
<comment type="PTM">
    <text evidence="1">Phosphorylated on tyrosine residue(s).</text>
</comment>
<comment type="similarity">
    <text evidence="2">Belongs to the bacterial flagellin family.</text>
</comment>
<organism>
    <name type="scientific">Pseudomonas aeruginosa (strain ATCC 15692 / DSM 22644 / CIP 104116 / JCM 14847 / LMG 12228 / 1C / PRS 101 / PAO1)</name>
    <dbReference type="NCBI Taxonomy" id="208964"/>
    <lineage>
        <taxon>Bacteria</taxon>
        <taxon>Pseudomonadati</taxon>
        <taxon>Pseudomonadota</taxon>
        <taxon>Gammaproteobacteria</taxon>
        <taxon>Pseudomonadales</taxon>
        <taxon>Pseudomonadaceae</taxon>
        <taxon>Pseudomonas</taxon>
    </lineage>
</organism>
<dbReference type="EMBL" id="U54775">
    <property type="protein sequence ID" value="AAA99807.1"/>
    <property type="molecule type" value="Genomic_DNA"/>
</dbReference>
<dbReference type="EMBL" id="AE004091">
    <property type="protein sequence ID" value="AAG04481.1"/>
    <property type="molecule type" value="Genomic_DNA"/>
</dbReference>
<dbReference type="PIR" id="E83507">
    <property type="entry name" value="E83507"/>
</dbReference>
<dbReference type="RefSeq" id="NP_249783.1">
    <property type="nucleotide sequence ID" value="NC_002516.2"/>
</dbReference>
<dbReference type="RefSeq" id="WP_003112503.1">
    <property type="nucleotide sequence ID" value="NZ_QZGE01000006.1"/>
</dbReference>
<dbReference type="PDB" id="5WK5">
    <property type="method" value="EM"/>
    <property type="resolution" value="4.20 A"/>
    <property type="chains" value="A/B/C/D/E/F/G/H/I/J/K/L/M/N/O/P/Q/R/S/T/U/V/W/X/Y/Z/a/b/c/d=1-488"/>
</dbReference>
<dbReference type="PDB" id="5WK6">
    <property type="method" value="EM"/>
    <property type="resolution" value="4.30 A"/>
    <property type="chains" value="A/B/C/D/E/F/G/H/I/J/K/L/M/N/O/P/Q/R/S/T/U/V/W/X/Y/Z/a/b/c/d=1-488"/>
</dbReference>
<dbReference type="PDB" id="8ERM">
    <property type="method" value="X-ray"/>
    <property type="resolution" value="1.48 A"/>
    <property type="chains" value="A/B=178-395"/>
</dbReference>
<dbReference type="PDB" id="8SUG">
    <property type="method" value="EM"/>
    <property type="resolution" value="4.20 A"/>
    <property type="chains" value="A/B/C/D/E/F/G/H/I/J/K/L/M/N/O/P/Q/R/S/T/U/V/W/X/Y/Z/a/b/c/d=5-488"/>
</dbReference>
<dbReference type="PDBsum" id="5WK5"/>
<dbReference type="PDBsum" id="5WK6"/>
<dbReference type="PDBsum" id="8ERM"/>
<dbReference type="PDBsum" id="8SUG"/>
<dbReference type="EMDB" id="EMD-40765"/>
<dbReference type="EMDB" id="EMD-8855"/>
<dbReference type="EMDB" id="EMD-8856"/>
<dbReference type="SMR" id="P72151"/>
<dbReference type="DIP" id="DIP-59151N"/>
<dbReference type="FunCoup" id="P72151">
    <property type="interactions" value="178"/>
</dbReference>
<dbReference type="IntAct" id="P72151">
    <property type="interactions" value="1"/>
</dbReference>
<dbReference type="STRING" id="208964.PA1092"/>
<dbReference type="iPTMnet" id="P72151"/>
<dbReference type="PaxDb" id="208964-PA1092"/>
<dbReference type="DNASU" id="882052"/>
<dbReference type="GeneID" id="882052"/>
<dbReference type="KEGG" id="pae:PA1092"/>
<dbReference type="PATRIC" id="fig|208964.12.peg.1131"/>
<dbReference type="PseudoCAP" id="PA1092"/>
<dbReference type="HOGENOM" id="CLU_011142_7_1_6"/>
<dbReference type="InParanoid" id="P72151"/>
<dbReference type="OrthoDB" id="9796789at2"/>
<dbReference type="PhylomeDB" id="P72151"/>
<dbReference type="BioCyc" id="PAER208964:G1FZ6-1115-MONOMER"/>
<dbReference type="Proteomes" id="UP000002438">
    <property type="component" value="Chromosome"/>
</dbReference>
<dbReference type="GO" id="GO:0009288">
    <property type="term" value="C:bacterial-type flagellum"/>
    <property type="evidence" value="ECO:0007669"/>
    <property type="project" value="UniProtKB-SubCell"/>
</dbReference>
<dbReference type="GO" id="GO:0005576">
    <property type="term" value="C:extracellular region"/>
    <property type="evidence" value="ECO:0007669"/>
    <property type="project" value="UniProtKB-SubCell"/>
</dbReference>
<dbReference type="GO" id="GO:0005198">
    <property type="term" value="F:structural molecule activity"/>
    <property type="evidence" value="ECO:0007669"/>
    <property type="project" value="InterPro"/>
</dbReference>
<dbReference type="GO" id="GO:0071973">
    <property type="term" value="P:bacterial-type flagellum-dependent cell motility"/>
    <property type="evidence" value="ECO:0000314"/>
    <property type="project" value="PseudoCAP"/>
</dbReference>
<dbReference type="Gene3D" id="6.10.280.190">
    <property type="match status" value="1"/>
</dbReference>
<dbReference type="Gene3D" id="2.30.220.10">
    <property type="entry name" value="f41 fragment of flagellin, C-terminal domain"/>
    <property type="match status" value="1"/>
</dbReference>
<dbReference type="Gene3D" id="2.170.280.10">
    <property type="entry name" value="f41 fragment of flagellin, middle domain"/>
    <property type="match status" value="1"/>
</dbReference>
<dbReference type="Gene3D" id="1.20.1330.10">
    <property type="entry name" value="f41 fragment of flagellin, N-terminal domain"/>
    <property type="match status" value="1"/>
</dbReference>
<dbReference type="Gene3D" id="6.10.10.10">
    <property type="entry name" value="Flagellar export chaperone, C-terminal domain"/>
    <property type="match status" value="1"/>
</dbReference>
<dbReference type="InterPro" id="IPR001492">
    <property type="entry name" value="Flagellin"/>
</dbReference>
<dbReference type="InterPro" id="IPR046358">
    <property type="entry name" value="Flagellin_C"/>
</dbReference>
<dbReference type="InterPro" id="IPR042187">
    <property type="entry name" value="Flagellin_C_sub2"/>
</dbReference>
<dbReference type="InterPro" id="IPR010810">
    <property type="entry name" value="Flagellin_hook_IN_motif"/>
</dbReference>
<dbReference type="InterPro" id="IPR001029">
    <property type="entry name" value="Flagellin_N"/>
</dbReference>
<dbReference type="PANTHER" id="PTHR42792">
    <property type="entry name" value="FLAGELLIN"/>
    <property type="match status" value="1"/>
</dbReference>
<dbReference type="PANTHER" id="PTHR42792:SF2">
    <property type="entry name" value="FLAGELLIN"/>
    <property type="match status" value="1"/>
</dbReference>
<dbReference type="Pfam" id="PF00700">
    <property type="entry name" value="Flagellin_C"/>
    <property type="match status" value="1"/>
</dbReference>
<dbReference type="Pfam" id="PF07196">
    <property type="entry name" value="Flagellin_IN"/>
    <property type="match status" value="1"/>
</dbReference>
<dbReference type="Pfam" id="PF00669">
    <property type="entry name" value="Flagellin_N"/>
    <property type="match status" value="1"/>
</dbReference>
<dbReference type="PRINTS" id="PR00207">
    <property type="entry name" value="FLAGELLIN"/>
</dbReference>
<dbReference type="SUPFAM" id="SSF64518">
    <property type="entry name" value="Phase 1 flagellin"/>
    <property type="match status" value="1"/>
</dbReference>
<feature type="chain" id="PRO_0000182620" description="B-type flagellin">
    <location>
        <begin position="1"/>
        <end position="488"/>
    </location>
</feature>
<feature type="sequence conflict" description="In Ref. 1; AAA99807." evidence="2" ref="1">
    <original>Q</original>
    <variation>E</variation>
    <location>
        <position position="30"/>
    </location>
</feature>
<feature type="sequence conflict" description="In Ref. 1; AAA99807." evidence="2" ref="1">
    <original>G</original>
    <variation>A</variation>
    <location>
        <position position="377"/>
    </location>
</feature>
<feature type="strand" evidence="3">
    <location>
        <begin position="188"/>
        <end position="192"/>
    </location>
</feature>
<feature type="strand" evidence="3">
    <location>
        <begin position="197"/>
        <end position="203"/>
    </location>
</feature>
<feature type="strand" evidence="3">
    <location>
        <begin position="206"/>
        <end position="212"/>
    </location>
</feature>
<feature type="helix" evidence="3">
    <location>
        <begin position="218"/>
        <end position="225"/>
    </location>
</feature>
<feature type="strand" evidence="3">
    <location>
        <begin position="233"/>
        <end position="250"/>
    </location>
</feature>
<feature type="strand" evidence="3">
    <location>
        <begin position="252"/>
        <end position="258"/>
    </location>
</feature>
<feature type="strand" evidence="3">
    <location>
        <begin position="261"/>
        <end position="268"/>
    </location>
</feature>
<feature type="helix" evidence="3">
    <location>
        <begin position="271"/>
        <end position="280"/>
    </location>
</feature>
<feature type="helix" evidence="3">
    <location>
        <begin position="282"/>
        <end position="285"/>
    </location>
</feature>
<feature type="strand" evidence="3">
    <location>
        <begin position="288"/>
        <end position="291"/>
    </location>
</feature>
<feature type="strand" evidence="3">
    <location>
        <begin position="297"/>
        <end position="301"/>
    </location>
</feature>
<feature type="strand" evidence="3">
    <location>
        <begin position="307"/>
        <end position="309"/>
    </location>
</feature>
<feature type="strand" evidence="3">
    <location>
        <begin position="317"/>
        <end position="326"/>
    </location>
</feature>
<feature type="strand" evidence="3">
    <location>
        <begin position="337"/>
        <end position="344"/>
    </location>
</feature>
<feature type="strand" evidence="3">
    <location>
        <begin position="350"/>
        <end position="352"/>
    </location>
</feature>
<feature type="strand" evidence="3">
    <location>
        <begin position="354"/>
        <end position="358"/>
    </location>
</feature>
<feature type="strand" evidence="3">
    <location>
        <begin position="363"/>
        <end position="366"/>
    </location>
</feature>
<feature type="turn" evidence="3">
    <location>
        <begin position="369"/>
        <end position="372"/>
    </location>
</feature>
<feature type="helix" evidence="3">
    <location>
        <begin position="373"/>
        <end position="376"/>
    </location>
</feature>
<sequence>MALTVNTNIASLNTQRNLNASSNDLNTSLQRLTTGYRINSAKDDAAGLQISNRLSNQISGLNVATRNANDGISLAQTAEGALQQSTNILQRIRDLALQSANGSNSDADRAALQKEVAAQQAELTRISDTTTFGGRKLLDGSFGTTSFQVGSNAYETIDISLQNASASAIGSYQVGSNGAGTVASVAGTATASGIASGTVNLVGGGQVKNIAIAAGDSAKAIAEKMDGAIPNLSARARTVFTADVSGVTGGSLNFDVTVGSNTVSLAGVTSTQDLADQLNSNSSKLGITASINDKGVLTITSATGENVKFGAQTGTATAGQVAVKVQGSDGKFEAAAKNVVAAGTAATTTIVTGYVQLNSPTAYSVSGTGTQASQVFGNASAAQKSSVASVDISTADGAQNAIAVVDNALAAIDAQRADLGAVQNRFKNTIDNLTNISENATNARSRIKDTDFAAETAALSKNQVLQQAGTAILAQANQLPQAVLSLLR</sequence>
<keyword id="KW-0002">3D-structure</keyword>
<keyword id="KW-0975">Bacterial flagellum</keyword>
<keyword id="KW-0597">Phosphoprotein</keyword>
<keyword id="KW-1185">Reference proteome</keyword>
<keyword id="KW-0964">Secreted</keyword>
<protein>
    <recommendedName>
        <fullName>B-type flagellin</fullName>
    </recommendedName>
</protein>
<evidence type="ECO:0000269" key="1">
    <source>
    </source>
</evidence>
<evidence type="ECO:0000305" key="2"/>
<evidence type="ECO:0007829" key="3">
    <source>
        <dbReference type="PDB" id="8ERM"/>
    </source>
</evidence>